<dbReference type="EMBL" id="L12696">
    <property type="protein sequence ID" value="AAA53437.1"/>
    <property type="status" value="ALT_SEQ"/>
    <property type="molecule type" value="Genomic_DNA"/>
</dbReference>
<dbReference type="EMBL" id="L12697">
    <property type="protein sequence ID" value="AAA53438.1"/>
    <property type="status" value="ALT_SEQ"/>
    <property type="molecule type" value="Genomic_DNA"/>
</dbReference>
<dbReference type="PIR" id="F48423">
    <property type="entry name" value="F48423"/>
</dbReference>
<dbReference type="RefSeq" id="NP_001254648.1">
    <property type="nucleotide sequence ID" value="NM_001267719.2"/>
</dbReference>
<dbReference type="PDB" id="3ZOB">
    <property type="method" value="NMR"/>
    <property type="chains" value="A=200-259"/>
</dbReference>
<dbReference type="PDBsum" id="3ZOB"/>
<dbReference type="BMRB" id="Q05917"/>
<dbReference type="SMR" id="Q05917"/>
<dbReference type="FunCoup" id="Q05917">
    <property type="interactions" value="133"/>
</dbReference>
<dbReference type="STRING" id="9031.ENSGALP00000045557"/>
<dbReference type="PaxDb" id="9031-ENSGALP00000042412"/>
<dbReference type="Ensembl" id="ENSGALT00010060632.1">
    <property type="protein sequence ID" value="ENSGALP00010037391.1"/>
    <property type="gene ID" value="ENSGALG00010024838.1"/>
</dbReference>
<dbReference type="GeneID" id="100859435"/>
<dbReference type="KEGG" id="gga:100859435"/>
<dbReference type="CTD" id="2020"/>
<dbReference type="VEuPathDB" id="HostDB:geneid_100859435"/>
<dbReference type="eggNOG" id="KOG0493">
    <property type="taxonomic scope" value="Eukaryota"/>
</dbReference>
<dbReference type="GeneTree" id="ENSGT00940000159935"/>
<dbReference type="HOGENOM" id="CLU_051739_2_0_1"/>
<dbReference type="InParanoid" id="Q05917"/>
<dbReference type="OMA" id="GGQPMLW"/>
<dbReference type="OrthoDB" id="6159439at2759"/>
<dbReference type="EvolutionaryTrace" id="Q05917"/>
<dbReference type="PRO" id="PR:Q05917"/>
<dbReference type="Proteomes" id="UP000000539">
    <property type="component" value="Chromosome 2"/>
</dbReference>
<dbReference type="Bgee" id="ENSGALG00000041295">
    <property type="expression patterns" value="Expressed in cerebellum and 1 other cell type or tissue"/>
</dbReference>
<dbReference type="GO" id="GO:0001650">
    <property type="term" value="C:fibrillar center"/>
    <property type="evidence" value="ECO:0007669"/>
    <property type="project" value="Ensembl"/>
</dbReference>
<dbReference type="GO" id="GO:0030175">
    <property type="term" value="C:filopodium"/>
    <property type="evidence" value="ECO:0000314"/>
    <property type="project" value="UniProtKB"/>
</dbReference>
<dbReference type="GO" id="GO:0030426">
    <property type="term" value="C:growth cone"/>
    <property type="evidence" value="ECO:0000314"/>
    <property type="project" value="UniProtKB"/>
</dbReference>
<dbReference type="GO" id="GO:0030027">
    <property type="term" value="C:lamellipodium"/>
    <property type="evidence" value="ECO:0000314"/>
    <property type="project" value="UniProtKB"/>
</dbReference>
<dbReference type="GO" id="GO:0043005">
    <property type="term" value="C:neuron projection"/>
    <property type="evidence" value="ECO:0000314"/>
    <property type="project" value="UniProtKB"/>
</dbReference>
<dbReference type="GO" id="GO:0005654">
    <property type="term" value="C:nucleoplasm"/>
    <property type="evidence" value="ECO:0007669"/>
    <property type="project" value="Ensembl"/>
</dbReference>
<dbReference type="GO" id="GO:0005634">
    <property type="term" value="C:nucleus"/>
    <property type="evidence" value="ECO:0000318"/>
    <property type="project" value="GO_Central"/>
</dbReference>
<dbReference type="GO" id="GO:0001228">
    <property type="term" value="F:DNA-binding transcription activator activity, RNA polymerase II-specific"/>
    <property type="evidence" value="ECO:0000314"/>
    <property type="project" value="BHF-UCL"/>
</dbReference>
<dbReference type="GO" id="GO:0000981">
    <property type="term" value="F:DNA-binding transcription factor activity, RNA polymerase II-specific"/>
    <property type="evidence" value="ECO:0000318"/>
    <property type="project" value="GO_Central"/>
</dbReference>
<dbReference type="GO" id="GO:0000978">
    <property type="term" value="F:RNA polymerase II cis-regulatory region sequence-specific DNA binding"/>
    <property type="evidence" value="ECO:0000314"/>
    <property type="project" value="BHF-UCL"/>
</dbReference>
<dbReference type="GO" id="GO:0061629">
    <property type="term" value="F:RNA polymerase II-specific DNA-binding transcription factor binding"/>
    <property type="evidence" value="ECO:0000353"/>
    <property type="project" value="BHF-UCL"/>
</dbReference>
<dbReference type="GO" id="GO:0003714">
    <property type="term" value="F:transcription corepressor activity"/>
    <property type="evidence" value="ECO:0000314"/>
    <property type="project" value="BHF-UCL"/>
</dbReference>
<dbReference type="GO" id="GO:0007411">
    <property type="term" value="P:axon guidance"/>
    <property type="evidence" value="ECO:0000314"/>
    <property type="project" value="UniProtKB"/>
</dbReference>
<dbReference type="GO" id="GO:0021953">
    <property type="term" value="P:central nervous system neuron differentiation"/>
    <property type="evidence" value="ECO:0007669"/>
    <property type="project" value="Ensembl"/>
</dbReference>
<dbReference type="GO" id="GO:0071542">
    <property type="term" value="P:dopaminergic neuron differentiation"/>
    <property type="evidence" value="ECO:0007669"/>
    <property type="project" value="Ensembl"/>
</dbReference>
<dbReference type="GO" id="GO:1990403">
    <property type="term" value="P:embryonic brain development"/>
    <property type="evidence" value="ECO:0007669"/>
    <property type="project" value="Ensembl"/>
</dbReference>
<dbReference type="GO" id="GO:0030902">
    <property type="term" value="P:hindbrain development"/>
    <property type="evidence" value="ECO:0007669"/>
    <property type="project" value="Ensembl"/>
</dbReference>
<dbReference type="GO" id="GO:0030901">
    <property type="term" value="P:midbrain development"/>
    <property type="evidence" value="ECO:0007669"/>
    <property type="project" value="Ensembl"/>
</dbReference>
<dbReference type="GO" id="GO:0043524">
    <property type="term" value="P:negative regulation of neuron apoptotic process"/>
    <property type="evidence" value="ECO:0007669"/>
    <property type="project" value="Ensembl"/>
</dbReference>
<dbReference type="GO" id="GO:0000122">
    <property type="term" value="P:negative regulation of transcription by RNA polymerase II"/>
    <property type="evidence" value="ECO:0000314"/>
    <property type="project" value="BHF-UCL"/>
</dbReference>
<dbReference type="GO" id="GO:0042327">
    <property type="term" value="P:positive regulation of phosphorylation"/>
    <property type="evidence" value="ECO:0000314"/>
    <property type="project" value="UniProtKB"/>
</dbReference>
<dbReference type="GO" id="GO:0045944">
    <property type="term" value="P:positive regulation of transcription by RNA polymerase II"/>
    <property type="evidence" value="ECO:0000314"/>
    <property type="project" value="BHF-UCL"/>
</dbReference>
<dbReference type="GO" id="GO:0045727">
    <property type="term" value="P:positive regulation of translation"/>
    <property type="evidence" value="ECO:0000314"/>
    <property type="project" value="UniProtKB"/>
</dbReference>
<dbReference type="GO" id="GO:0006357">
    <property type="term" value="P:regulation of transcription by RNA polymerase II"/>
    <property type="evidence" value="ECO:0000318"/>
    <property type="project" value="GO_Central"/>
</dbReference>
<dbReference type="CDD" id="cd00086">
    <property type="entry name" value="homeodomain"/>
    <property type="match status" value="1"/>
</dbReference>
<dbReference type="DisProt" id="DP01779"/>
<dbReference type="FunFam" id="1.10.10.60:FF:000167">
    <property type="entry name" value="Homeobox protein engrailed-like"/>
    <property type="match status" value="1"/>
</dbReference>
<dbReference type="Gene3D" id="1.10.10.60">
    <property type="entry name" value="Homeodomain-like"/>
    <property type="match status" value="1"/>
</dbReference>
<dbReference type="InterPro" id="IPR050720">
    <property type="entry name" value="Engrailed_Homeobox_TFs"/>
</dbReference>
<dbReference type="InterPro" id="IPR001356">
    <property type="entry name" value="HD"/>
</dbReference>
<dbReference type="InterPro" id="IPR000747">
    <property type="entry name" value="HD_engrailed"/>
</dbReference>
<dbReference type="InterPro" id="IPR020479">
    <property type="entry name" value="HD_metazoa"/>
</dbReference>
<dbReference type="InterPro" id="IPR019549">
    <property type="entry name" value="Homeobox-engrailed_C-terminal"/>
</dbReference>
<dbReference type="InterPro" id="IPR019737">
    <property type="entry name" value="Homeobox-engrailed_CS"/>
</dbReference>
<dbReference type="InterPro" id="IPR017970">
    <property type="entry name" value="Homeobox_CS"/>
</dbReference>
<dbReference type="InterPro" id="IPR009057">
    <property type="entry name" value="Homeodomain-like_sf"/>
</dbReference>
<dbReference type="InterPro" id="IPR000047">
    <property type="entry name" value="HTH_motif"/>
</dbReference>
<dbReference type="PANTHER" id="PTHR24341">
    <property type="entry name" value="HOMEOBOX PROTEIN ENGRAILED"/>
    <property type="match status" value="1"/>
</dbReference>
<dbReference type="PANTHER" id="PTHR24341:SF5">
    <property type="entry name" value="HOMEOBOX PROTEIN ENGRAILED-2"/>
    <property type="match status" value="1"/>
</dbReference>
<dbReference type="Pfam" id="PF10525">
    <property type="entry name" value="Engrail_1_C_sig"/>
    <property type="match status" value="1"/>
</dbReference>
<dbReference type="Pfam" id="PF00046">
    <property type="entry name" value="Homeodomain"/>
    <property type="match status" value="1"/>
</dbReference>
<dbReference type="PRINTS" id="PR00026">
    <property type="entry name" value="ENGRAILED"/>
</dbReference>
<dbReference type="PRINTS" id="PR00024">
    <property type="entry name" value="HOMEOBOX"/>
</dbReference>
<dbReference type="PRINTS" id="PR00031">
    <property type="entry name" value="HTHREPRESSR"/>
</dbReference>
<dbReference type="SMART" id="SM00389">
    <property type="entry name" value="HOX"/>
    <property type="match status" value="1"/>
</dbReference>
<dbReference type="SUPFAM" id="SSF46689">
    <property type="entry name" value="Homeodomain-like"/>
    <property type="match status" value="1"/>
</dbReference>
<dbReference type="PROSITE" id="PS00033">
    <property type="entry name" value="ENGRAILED"/>
    <property type="match status" value="1"/>
</dbReference>
<dbReference type="PROSITE" id="PS00027">
    <property type="entry name" value="HOMEOBOX_1"/>
    <property type="match status" value="1"/>
</dbReference>
<dbReference type="PROSITE" id="PS50071">
    <property type="entry name" value="HOMEOBOX_2"/>
    <property type="match status" value="1"/>
</dbReference>
<sequence length="289" mass="30507">MEEGGRSPREEAAEPQESGGDAEPGGGRRALLLPPGDPPHPHPHPHRITNFFIDNILRPEFGRRKEAGGTAGEPRRPGAESRRSPAAAAPAPGAPVPGGGGGGGGGSPGRGEGGPAALALHGAAKKGGDPAALEAALKARGLSGAELSVSSDSDSSQAGSNAGNQPMLWPAWVYCTRYSDRPSSGPRSRKPKKKNPNKEDKRPRTAFTAEQLQRLKAEFQTNRYLTEQRRQSLAQELGLNESQIKIWFQNKRAKIKKATGSKNSLAVHLMAQGLYNHSTTAKDGKSDSE</sequence>
<gene>
    <name type="primary">EN2</name>
    <name type="synonym">EN-2</name>
</gene>
<organism>
    <name type="scientific">Gallus gallus</name>
    <name type="common">Chicken</name>
    <dbReference type="NCBI Taxonomy" id="9031"/>
    <lineage>
        <taxon>Eukaryota</taxon>
        <taxon>Metazoa</taxon>
        <taxon>Chordata</taxon>
        <taxon>Craniata</taxon>
        <taxon>Vertebrata</taxon>
        <taxon>Euteleostomi</taxon>
        <taxon>Archelosauria</taxon>
        <taxon>Archosauria</taxon>
        <taxon>Dinosauria</taxon>
        <taxon>Saurischia</taxon>
        <taxon>Theropoda</taxon>
        <taxon>Coelurosauria</taxon>
        <taxon>Aves</taxon>
        <taxon>Neognathae</taxon>
        <taxon>Galloanserae</taxon>
        <taxon>Galliformes</taxon>
        <taxon>Phasianidae</taxon>
        <taxon>Phasianinae</taxon>
        <taxon>Gallus</taxon>
    </lineage>
</organism>
<feature type="chain" id="PRO_0000196069" description="Homeobox protein engrailed-2">
    <location>
        <begin position="1"/>
        <end position="289"/>
    </location>
</feature>
<feature type="DNA-binding region" description="Homeobox" evidence="1">
    <location>
        <begin position="200"/>
        <end position="259"/>
    </location>
</feature>
<feature type="region of interest" description="Disordered" evidence="2">
    <location>
        <begin position="1"/>
        <end position="166"/>
    </location>
</feature>
<feature type="region of interest" description="Disordered" evidence="2">
    <location>
        <begin position="179"/>
        <end position="206"/>
    </location>
</feature>
<feature type="compositionally biased region" description="Basic and acidic residues" evidence="2">
    <location>
        <begin position="1"/>
        <end position="12"/>
    </location>
</feature>
<feature type="compositionally biased region" description="Basic and acidic residues" evidence="2">
    <location>
        <begin position="60"/>
        <end position="83"/>
    </location>
</feature>
<feature type="compositionally biased region" description="Gly residues" evidence="2">
    <location>
        <begin position="96"/>
        <end position="114"/>
    </location>
</feature>
<feature type="compositionally biased region" description="Low complexity" evidence="2">
    <location>
        <begin position="142"/>
        <end position="160"/>
    </location>
</feature>
<feature type="strand" evidence="4">
    <location>
        <begin position="203"/>
        <end position="206"/>
    </location>
</feature>
<feature type="helix" evidence="4">
    <location>
        <begin position="209"/>
        <end position="221"/>
    </location>
</feature>
<feature type="turn" evidence="4">
    <location>
        <begin position="227"/>
        <end position="229"/>
    </location>
</feature>
<feature type="helix" evidence="4">
    <location>
        <begin position="230"/>
        <end position="236"/>
    </location>
</feature>
<feature type="helix" evidence="4">
    <location>
        <begin position="241"/>
        <end position="252"/>
    </location>
</feature>
<feature type="strand" evidence="4">
    <location>
        <begin position="254"/>
        <end position="256"/>
    </location>
</feature>
<comment type="subcellular location">
    <subcellularLocation>
        <location>Nucleus</location>
    </subcellularLocation>
</comment>
<comment type="similarity">
    <text evidence="3">Belongs to the engrailed homeobox family.</text>
</comment>
<comment type="sequence caution" evidence="3">
    <conflict type="erroneous gene model prediction">
        <sequence resource="EMBL-CDS" id="AAA53437"/>
    </conflict>
</comment>
<comment type="sequence caution" evidence="3">
    <conflict type="erroneous gene model prediction">
        <sequence resource="EMBL-CDS" id="AAA53438"/>
    </conflict>
</comment>
<keyword id="KW-0002">3D-structure</keyword>
<keyword id="KW-0217">Developmental protein</keyword>
<keyword id="KW-0238">DNA-binding</keyword>
<keyword id="KW-0371">Homeobox</keyword>
<keyword id="KW-0539">Nucleus</keyword>
<keyword id="KW-1185">Reference proteome</keyword>
<reference key="1">
    <citation type="journal article" date="1992" name="Dev. Genet.">
        <title>Cloning and sequence comparison of the mouse, human, and chicken engrailed genes reveal potential functional domains and regulatory regions.</title>
        <authorList>
            <person name="Logan C."/>
            <person name="Hanks M.C."/>
            <person name="Noble-Topham S."/>
            <person name="Nallainathan D."/>
            <person name="Provart N.J."/>
            <person name="Joyner A.L."/>
        </authorList>
    </citation>
    <scope>NUCLEOTIDE SEQUENCE [GENOMIC DNA]</scope>
</reference>
<name>HME2_CHICK</name>
<accession>Q05917</accession>
<protein>
    <recommendedName>
        <fullName>Homeobox protein engrailed-2</fullName>
        <shortName>Gg-En-2</shortName>
        <shortName>Homeobox protein en-2</shortName>
    </recommendedName>
</protein>
<evidence type="ECO:0000255" key="1">
    <source>
        <dbReference type="PROSITE-ProRule" id="PRU00108"/>
    </source>
</evidence>
<evidence type="ECO:0000256" key="2">
    <source>
        <dbReference type="SAM" id="MobiDB-lite"/>
    </source>
</evidence>
<evidence type="ECO:0000305" key="3"/>
<evidence type="ECO:0007829" key="4">
    <source>
        <dbReference type="PDB" id="3ZOB"/>
    </source>
</evidence>
<proteinExistence type="evidence at protein level"/>